<dbReference type="EC" id="2.7.1.11" evidence="1"/>
<dbReference type="EMBL" id="CP001364">
    <property type="protein sequence ID" value="ACM51713.1"/>
    <property type="molecule type" value="Genomic_DNA"/>
</dbReference>
<dbReference type="SMR" id="B9LHK4"/>
<dbReference type="KEGG" id="chl:Chy400_0274"/>
<dbReference type="HOGENOM" id="CLU_020655_0_0_0"/>
<dbReference type="OrthoDB" id="9802503at2"/>
<dbReference type="UniPathway" id="UPA00109">
    <property type="reaction ID" value="UER00182"/>
</dbReference>
<dbReference type="GO" id="GO:0005945">
    <property type="term" value="C:6-phosphofructokinase complex"/>
    <property type="evidence" value="ECO:0007669"/>
    <property type="project" value="TreeGrafter"/>
</dbReference>
<dbReference type="GO" id="GO:0003872">
    <property type="term" value="F:6-phosphofructokinase activity"/>
    <property type="evidence" value="ECO:0007669"/>
    <property type="project" value="UniProtKB-UniRule"/>
</dbReference>
<dbReference type="GO" id="GO:0016208">
    <property type="term" value="F:AMP binding"/>
    <property type="evidence" value="ECO:0007669"/>
    <property type="project" value="TreeGrafter"/>
</dbReference>
<dbReference type="GO" id="GO:0005524">
    <property type="term" value="F:ATP binding"/>
    <property type="evidence" value="ECO:0007669"/>
    <property type="project" value="UniProtKB-KW"/>
</dbReference>
<dbReference type="GO" id="GO:0047334">
    <property type="term" value="F:diphosphate-fructose-6-phosphate 1-phosphotransferase activity"/>
    <property type="evidence" value="ECO:0007669"/>
    <property type="project" value="InterPro"/>
</dbReference>
<dbReference type="GO" id="GO:0070095">
    <property type="term" value="F:fructose-6-phosphate binding"/>
    <property type="evidence" value="ECO:0007669"/>
    <property type="project" value="TreeGrafter"/>
</dbReference>
<dbReference type="GO" id="GO:0042802">
    <property type="term" value="F:identical protein binding"/>
    <property type="evidence" value="ECO:0007669"/>
    <property type="project" value="TreeGrafter"/>
</dbReference>
<dbReference type="GO" id="GO:0046872">
    <property type="term" value="F:metal ion binding"/>
    <property type="evidence" value="ECO:0007669"/>
    <property type="project" value="UniProtKB-KW"/>
</dbReference>
<dbReference type="GO" id="GO:0048029">
    <property type="term" value="F:monosaccharide binding"/>
    <property type="evidence" value="ECO:0007669"/>
    <property type="project" value="TreeGrafter"/>
</dbReference>
<dbReference type="GO" id="GO:0061621">
    <property type="term" value="P:canonical glycolysis"/>
    <property type="evidence" value="ECO:0007669"/>
    <property type="project" value="TreeGrafter"/>
</dbReference>
<dbReference type="GO" id="GO:0030388">
    <property type="term" value="P:fructose 1,6-bisphosphate metabolic process"/>
    <property type="evidence" value="ECO:0007669"/>
    <property type="project" value="TreeGrafter"/>
</dbReference>
<dbReference type="GO" id="GO:0006002">
    <property type="term" value="P:fructose 6-phosphate metabolic process"/>
    <property type="evidence" value="ECO:0007669"/>
    <property type="project" value="InterPro"/>
</dbReference>
<dbReference type="FunFam" id="3.40.50.460:FF:000002">
    <property type="entry name" value="ATP-dependent 6-phosphofructokinase"/>
    <property type="match status" value="1"/>
</dbReference>
<dbReference type="Gene3D" id="3.40.50.450">
    <property type="match status" value="1"/>
</dbReference>
<dbReference type="Gene3D" id="3.40.50.460">
    <property type="entry name" value="Phosphofructokinase domain"/>
    <property type="match status" value="1"/>
</dbReference>
<dbReference type="HAMAP" id="MF_01976">
    <property type="entry name" value="Phosphofructokinase_III"/>
    <property type="match status" value="1"/>
</dbReference>
<dbReference type="InterPro" id="IPR022953">
    <property type="entry name" value="ATP_PFK"/>
</dbReference>
<dbReference type="InterPro" id="IPR012003">
    <property type="entry name" value="ATP_PFK_prok-type"/>
</dbReference>
<dbReference type="InterPro" id="IPR015912">
    <property type="entry name" value="Phosphofructokinase_CS"/>
</dbReference>
<dbReference type="InterPro" id="IPR000023">
    <property type="entry name" value="Phosphofructokinase_dom"/>
</dbReference>
<dbReference type="InterPro" id="IPR012829">
    <property type="entry name" value="Phosphofructokinase_III"/>
</dbReference>
<dbReference type="InterPro" id="IPR035966">
    <property type="entry name" value="PKF_sf"/>
</dbReference>
<dbReference type="NCBIfam" id="TIGR02483">
    <property type="entry name" value="PFK_mixed"/>
    <property type="match status" value="1"/>
</dbReference>
<dbReference type="NCBIfam" id="NF002872">
    <property type="entry name" value="PRK03202.1"/>
    <property type="match status" value="1"/>
</dbReference>
<dbReference type="PANTHER" id="PTHR13697:SF52">
    <property type="entry name" value="ATP-DEPENDENT 6-PHOSPHOFRUCTOKINASE 3"/>
    <property type="match status" value="1"/>
</dbReference>
<dbReference type="PANTHER" id="PTHR13697">
    <property type="entry name" value="PHOSPHOFRUCTOKINASE"/>
    <property type="match status" value="1"/>
</dbReference>
<dbReference type="Pfam" id="PF00365">
    <property type="entry name" value="PFK"/>
    <property type="match status" value="1"/>
</dbReference>
<dbReference type="PIRSF" id="PIRSF000532">
    <property type="entry name" value="ATP_PFK_prok"/>
    <property type="match status" value="1"/>
</dbReference>
<dbReference type="PRINTS" id="PR00476">
    <property type="entry name" value="PHFRCTKINASE"/>
</dbReference>
<dbReference type="SUPFAM" id="SSF53784">
    <property type="entry name" value="Phosphofructokinase"/>
    <property type="match status" value="1"/>
</dbReference>
<dbReference type="PROSITE" id="PS00433">
    <property type="entry name" value="PHOSPHOFRUCTOKINASE"/>
    <property type="match status" value="1"/>
</dbReference>
<organism>
    <name type="scientific">Chloroflexus aurantiacus (strain ATCC 29364 / DSM 637 / Y-400-fl)</name>
    <dbReference type="NCBI Taxonomy" id="480224"/>
    <lineage>
        <taxon>Bacteria</taxon>
        <taxon>Bacillati</taxon>
        <taxon>Chloroflexota</taxon>
        <taxon>Chloroflexia</taxon>
        <taxon>Chloroflexales</taxon>
        <taxon>Chloroflexineae</taxon>
        <taxon>Chloroflexaceae</taxon>
        <taxon>Chloroflexus</taxon>
    </lineage>
</organism>
<comment type="function">
    <text evidence="1">Catalyzes the phosphorylation of D-fructose 6-phosphate to fructose 1,6-bisphosphate by ATP, the first committing step of glycolysis.</text>
</comment>
<comment type="catalytic activity">
    <reaction evidence="1">
        <text>beta-D-fructose 6-phosphate + ATP = beta-D-fructose 1,6-bisphosphate + ADP + H(+)</text>
        <dbReference type="Rhea" id="RHEA:16109"/>
        <dbReference type="ChEBI" id="CHEBI:15378"/>
        <dbReference type="ChEBI" id="CHEBI:30616"/>
        <dbReference type="ChEBI" id="CHEBI:32966"/>
        <dbReference type="ChEBI" id="CHEBI:57634"/>
        <dbReference type="ChEBI" id="CHEBI:456216"/>
        <dbReference type="EC" id="2.7.1.11"/>
    </reaction>
</comment>
<comment type="cofactor">
    <cofactor evidence="1">
        <name>Mg(2+)</name>
        <dbReference type="ChEBI" id="CHEBI:18420"/>
    </cofactor>
</comment>
<comment type="pathway">
    <text evidence="1">Carbohydrate degradation; glycolysis; D-glyceraldehyde 3-phosphate and glycerone phosphate from D-glucose: step 3/4.</text>
</comment>
<comment type="subunit">
    <text evidence="1">Homodimer or homotetramer.</text>
</comment>
<comment type="subcellular location">
    <subcellularLocation>
        <location evidence="1">Cytoplasm</location>
    </subcellularLocation>
</comment>
<comment type="similarity">
    <text evidence="1">Belongs to the phosphofructokinase type A (PFKA) family. Mixed-substrate PFK group III subfamily.</text>
</comment>
<sequence length="356" mass="37703">MASKKQRIGVLTSGGDAPGLNAVIRAVVKSASGLGWEVIGIHDGFEGLLGTKSYRVLTNADVQGLLPRGGTILRTTNKGHFGPRRSDELSEADPYVRAVKAIEEMGLRALITIGGEGTQRIALELHKLGAPVIGVPKTIDNDLAGTDRTFGFDTALQVATDAIDRLHTTAASHNRVMVLEVMGRHTGWIALHAGLAGGADVILIPEIPFSIERVAEKVMARDQQGSSFSIIVVAEGARPRGGSEMYIAEGRLGGIGHWVGEQLEKLTAKEVRVVVLGHLQRGGSPSPYDRLLSTRYGAAAVQAAARGIYGEMVALRGQDIVTVPLAEACGHLNRVRPHSDLVLCARSLGIAFGDEL</sequence>
<reference key="1">
    <citation type="submission" date="2009-01" db="EMBL/GenBank/DDBJ databases">
        <title>Complete sequence of Chloroflexus sp. Y-400-fl.</title>
        <authorList>
            <consortium name="US DOE Joint Genome Institute"/>
            <person name="Lucas S."/>
            <person name="Copeland A."/>
            <person name="Lapidus A."/>
            <person name="Glavina del Rio T."/>
            <person name="Dalin E."/>
            <person name="Tice H."/>
            <person name="Bruce D."/>
            <person name="Goodwin L."/>
            <person name="Pitluck S."/>
            <person name="Sims D."/>
            <person name="Kiss H."/>
            <person name="Brettin T."/>
            <person name="Detter J.C."/>
            <person name="Han C."/>
            <person name="Larimer F."/>
            <person name="Land M."/>
            <person name="Hauser L."/>
            <person name="Kyrpides N."/>
            <person name="Ovchinnikova G."/>
            <person name="Bryant D.A."/>
            <person name="Richardson P."/>
        </authorList>
    </citation>
    <scope>NUCLEOTIDE SEQUENCE [LARGE SCALE GENOMIC DNA]</scope>
    <source>
        <strain>ATCC 29364 / DSM 637 / Y-400-fl</strain>
    </source>
</reference>
<gene>
    <name evidence="1" type="primary">pfkA</name>
    <name type="ordered locus">Chy400_0274</name>
</gene>
<keyword id="KW-0067">ATP-binding</keyword>
<keyword id="KW-0963">Cytoplasm</keyword>
<keyword id="KW-0324">Glycolysis</keyword>
<keyword id="KW-0418">Kinase</keyword>
<keyword id="KW-0460">Magnesium</keyword>
<keyword id="KW-0479">Metal-binding</keyword>
<keyword id="KW-0547">Nucleotide-binding</keyword>
<keyword id="KW-0808">Transferase</keyword>
<name>PFKA_CHLSY</name>
<proteinExistence type="inferred from homology"/>
<evidence type="ECO:0000255" key="1">
    <source>
        <dbReference type="HAMAP-Rule" id="MF_01976"/>
    </source>
</evidence>
<accession>B9LHK4</accession>
<protein>
    <recommendedName>
        <fullName evidence="1">ATP-dependent 6-phosphofructokinase</fullName>
        <shortName evidence="1">ATP-PFK</shortName>
        <shortName evidence="1">Phosphofructokinase</shortName>
        <ecNumber evidence="1">2.7.1.11</ecNumber>
    </recommendedName>
    <alternativeName>
        <fullName evidence="1">Phosphohexokinase</fullName>
    </alternativeName>
</protein>
<feature type="chain" id="PRO_1000192368" description="ATP-dependent 6-phosphofructokinase">
    <location>
        <begin position="1"/>
        <end position="356"/>
    </location>
</feature>
<feature type="active site" description="Proton acceptor" evidence="1">
    <location>
        <position position="140"/>
    </location>
</feature>
<feature type="binding site" evidence="1">
    <location>
        <position position="15"/>
    </location>
    <ligand>
        <name>ATP</name>
        <dbReference type="ChEBI" id="CHEBI:30616"/>
    </ligand>
</feature>
<feature type="binding site" evidence="1">
    <location>
        <begin position="78"/>
        <end position="79"/>
    </location>
    <ligand>
        <name>ATP</name>
        <dbReference type="ChEBI" id="CHEBI:30616"/>
    </ligand>
</feature>
<feature type="binding site" evidence="1">
    <location>
        <begin position="115"/>
        <end position="118"/>
    </location>
    <ligand>
        <name>ATP</name>
        <dbReference type="ChEBI" id="CHEBI:30616"/>
    </ligand>
</feature>
<feature type="binding site" evidence="1">
    <location>
        <position position="116"/>
    </location>
    <ligand>
        <name>Mg(2+)</name>
        <dbReference type="ChEBI" id="CHEBI:18420"/>
        <note>catalytic</note>
    </ligand>
</feature>
<feature type="binding site" description="in other chain" evidence="1">
    <location>
        <begin position="138"/>
        <end position="140"/>
    </location>
    <ligand>
        <name>substrate</name>
        <note>ligand shared between dimeric partners</note>
    </ligand>
</feature>
<feature type="binding site" evidence="1">
    <location>
        <position position="175"/>
    </location>
    <ligand>
        <name>substrate</name>
        <note>ligand shared between dimeric partners</note>
    </ligand>
</feature>
<feature type="binding site" description="in other chain" evidence="1">
    <location>
        <begin position="182"/>
        <end position="184"/>
    </location>
    <ligand>
        <name>substrate</name>
        <note>ligand shared between dimeric partners</note>
    </ligand>
</feature>
<feature type="binding site" description="in other chain" evidence="1">
    <location>
        <position position="235"/>
    </location>
    <ligand>
        <name>substrate</name>
        <note>ligand shared between dimeric partners</note>
    </ligand>
</feature>
<feature type="binding site" evidence="1">
    <location>
        <position position="272"/>
    </location>
    <ligand>
        <name>substrate</name>
        <note>ligand shared between dimeric partners</note>
    </ligand>
</feature>
<feature type="binding site" description="in other chain" evidence="1">
    <location>
        <begin position="278"/>
        <end position="281"/>
    </location>
    <ligand>
        <name>substrate</name>
        <note>ligand shared between dimeric partners</note>
    </ligand>
</feature>
<feature type="site" description="Important for substrate specificity; cannot use PPi as phosphoryl donor" evidence="1">
    <location>
        <position position="117"/>
    </location>
</feature>